<keyword id="KW-0963">Cytoplasm</keyword>
<keyword id="KW-0275">Fatty acid biosynthesis</keyword>
<keyword id="KW-0276">Fatty acid metabolism</keyword>
<keyword id="KW-0441">Lipid A biosynthesis</keyword>
<keyword id="KW-0444">Lipid biosynthesis</keyword>
<keyword id="KW-0443">Lipid metabolism</keyword>
<keyword id="KW-0596">Phosphopantetheine</keyword>
<keyword id="KW-0597">Phosphoprotein</keyword>
<protein>
    <recommendedName>
        <fullName>Acyl carrier protein AcpXL</fullName>
    </recommendedName>
</protein>
<reference key="1">
    <citation type="journal article" date="2000" name="DNA Res.">
        <title>Complete genome structure of the nitrogen-fixing symbiotic bacterium Mesorhizobium loti.</title>
        <authorList>
            <person name="Kaneko T."/>
            <person name="Nakamura Y."/>
            <person name="Sato S."/>
            <person name="Asamizu E."/>
            <person name="Kato T."/>
            <person name="Sasamoto S."/>
            <person name="Watanabe A."/>
            <person name="Idesawa K."/>
            <person name="Ishikawa A."/>
            <person name="Kawashima K."/>
            <person name="Kimura T."/>
            <person name="Kishida Y."/>
            <person name="Kiyokawa C."/>
            <person name="Kohara M."/>
            <person name="Matsumoto M."/>
            <person name="Matsuno A."/>
            <person name="Mochizuki Y."/>
            <person name="Nakayama S."/>
            <person name="Nakazaki N."/>
            <person name="Shimpo S."/>
            <person name="Sugimoto M."/>
            <person name="Takeuchi C."/>
            <person name="Yamada M."/>
            <person name="Tabata S."/>
        </authorList>
    </citation>
    <scope>NUCLEOTIDE SEQUENCE [LARGE SCALE GENOMIC DNA]</scope>
    <source>
        <strain>LMG 29417 / CECT 9101 / MAFF 303099</strain>
    </source>
</reference>
<proteinExistence type="inferred from homology"/>
<comment type="function">
    <text evidence="1">Carrier of the growing fatty acid chain in fatty acid biosynthesis. Is involved in the transfer of long hydroxylated fatty acids to lipid A (By similarity).</text>
</comment>
<comment type="pathway">
    <text>Glycolipid biosynthesis; KDO(2)-lipid A biosynthesis.</text>
</comment>
<comment type="subcellular location">
    <subcellularLocation>
        <location evidence="1">Cytoplasm</location>
    </subcellularLocation>
</comment>
<comment type="PTM">
    <text evidence="1">4'-phosphopantetheine is transferred from CoA to a specific serine of apo-ACP by AcpS. This modification is essential for activity because fatty acids are bound in thioester linkage to the sulfhydryl of the prosthetic group (By similarity).</text>
</comment>
<comment type="sequence caution" evidence="3">
    <conflict type="erroneous initiation">
        <sequence resource="EMBL-CDS" id="BAB48610"/>
    </conflict>
</comment>
<accession>Q98L53</accession>
<organism>
    <name type="scientific">Mesorhizobium japonicum (strain LMG 29417 / CECT 9101 / MAFF 303099)</name>
    <name type="common">Mesorhizobium loti (strain MAFF 303099)</name>
    <dbReference type="NCBI Taxonomy" id="266835"/>
    <lineage>
        <taxon>Bacteria</taxon>
        <taxon>Pseudomonadati</taxon>
        <taxon>Pseudomonadota</taxon>
        <taxon>Alphaproteobacteria</taxon>
        <taxon>Hyphomicrobiales</taxon>
        <taxon>Phyllobacteriaceae</taxon>
        <taxon>Mesorhizobium</taxon>
    </lineage>
</organism>
<sequence>MSTTFDKVAKIIADTSEIDIDTITPESHTIDDLGIDSLDFLDIVFAIDKEFGIKVPLEKWTQEVNDGKASTDDYFVMKNLCAKIDALVAAKTA</sequence>
<feature type="chain" id="PRO_0000180240" description="Acyl carrier protein AcpXL">
    <location>
        <begin position="1"/>
        <end position="93"/>
    </location>
</feature>
<feature type="domain" description="Carrier" evidence="2">
    <location>
        <begin position="2"/>
        <end position="88"/>
    </location>
</feature>
<feature type="modified residue" description="O-(pantetheine 4'-phosphoryl)serine" evidence="2">
    <location>
        <position position="37"/>
    </location>
</feature>
<name>ACPXL_RHILO</name>
<dbReference type="EMBL" id="BA000012">
    <property type="protein sequence ID" value="BAB48610.1"/>
    <property type="status" value="ALT_INIT"/>
    <property type="molecule type" value="Genomic_DNA"/>
</dbReference>
<dbReference type="RefSeq" id="WP_010909964.1">
    <property type="nucleotide sequence ID" value="NC_002678.2"/>
</dbReference>
<dbReference type="SMR" id="Q98L53"/>
<dbReference type="KEGG" id="mlo:mlr1174"/>
<dbReference type="eggNOG" id="COG0236">
    <property type="taxonomic scope" value="Bacteria"/>
</dbReference>
<dbReference type="HOGENOM" id="CLU_3315926_0_0_5"/>
<dbReference type="UniPathway" id="UPA00360"/>
<dbReference type="Proteomes" id="UP000000552">
    <property type="component" value="Chromosome"/>
</dbReference>
<dbReference type="GO" id="GO:0005829">
    <property type="term" value="C:cytosol"/>
    <property type="evidence" value="ECO:0007669"/>
    <property type="project" value="TreeGrafter"/>
</dbReference>
<dbReference type="GO" id="GO:0016020">
    <property type="term" value="C:membrane"/>
    <property type="evidence" value="ECO:0007669"/>
    <property type="project" value="GOC"/>
</dbReference>
<dbReference type="GO" id="GO:0000035">
    <property type="term" value="F:acyl binding"/>
    <property type="evidence" value="ECO:0007669"/>
    <property type="project" value="TreeGrafter"/>
</dbReference>
<dbReference type="GO" id="GO:0000036">
    <property type="term" value="F:acyl carrier activity"/>
    <property type="evidence" value="ECO:0007669"/>
    <property type="project" value="TreeGrafter"/>
</dbReference>
<dbReference type="GO" id="GO:0036104">
    <property type="term" value="P:Kdo2-lipid A biosynthetic process"/>
    <property type="evidence" value="ECO:0007669"/>
    <property type="project" value="UniProtKB-UniPathway"/>
</dbReference>
<dbReference type="GO" id="GO:0009245">
    <property type="term" value="P:lipid A biosynthetic process"/>
    <property type="evidence" value="ECO:0007669"/>
    <property type="project" value="UniProtKB-KW"/>
</dbReference>
<dbReference type="Gene3D" id="1.10.1200.10">
    <property type="entry name" value="ACP-like"/>
    <property type="match status" value="1"/>
</dbReference>
<dbReference type="InterPro" id="IPR003231">
    <property type="entry name" value="ACP"/>
</dbReference>
<dbReference type="InterPro" id="IPR036736">
    <property type="entry name" value="ACP-like_sf"/>
</dbReference>
<dbReference type="InterPro" id="IPR009081">
    <property type="entry name" value="PP-bd_ACP"/>
</dbReference>
<dbReference type="InterPro" id="IPR006162">
    <property type="entry name" value="Ppantetheine_attach_site"/>
</dbReference>
<dbReference type="NCBIfam" id="NF005079">
    <property type="entry name" value="PRK06508.1"/>
    <property type="match status" value="1"/>
</dbReference>
<dbReference type="PANTHER" id="PTHR20863">
    <property type="entry name" value="ACYL CARRIER PROTEIN"/>
    <property type="match status" value="1"/>
</dbReference>
<dbReference type="PANTHER" id="PTHR20863:SF76">
    <property type="entry name" value="CARRIER DOMAIN-CONTAINING PROTEIN"/>
    <property type="match status" value="1"/>
</dbReference>
<dbReference type="Pfam" id="PF00550">
    <property type="entry name" value="PP-binding"/>
    <property type="match status" value="1"/>
</dbReference>
<dbReference type="SUPFAM" id="SSF47336">
    <property type="entry name" value="ACP-like"/>
    <property type="match status" value="1"/>
</dbReference>
<dbReference type="PROSITE" id="PS50075">
    <property type="entry name" value="CARRIER"/>
    <property type="match status" value="1"/>
</dbReference>
<dbReference type="PROSITE" id="PS00012">
    <property type="entry name" value="PHOSPHOPANTETHEINE"/>
    <property type="match status" value="1"/>
</dbReference>
<gene>
    <name type="primary">acpXL</name>
    <name type="ordered locus">mlr1174</name>
</gene>
<evidence type="ECO:0000250" key="1"/>
<evidence type="ECO:0000255" key="2">
    <source>
        <dbReference type="PROSITE-ProRule" id="PRU00258"/>
    </source>
</evidence>
<evidence type="ECO:0000305" key="3"/>